<protein>
    <recommendedName>
        <fullName>Zinc finger protein ZFAT</fullName>
    </recommendedName>
    <alternativeName>
        <fullName>Zinc finger gene in AITD susceptibility region</fullName>
    </alternativeName>
    <alternativeName>
        <fullName>Zinc finger protein 406</fullName>
    </alternativeName>
</protein>
<gene>
    <name type="primary">ZFAT</name>
    <name type="synonym">KIAA1485</name>
    <name type="synonym">ZFAT1</name>
    <name type="synonym">ZNF406</name>
</gene>
<organism>
    <name type="scientific">Homo sapiens</name>
    <name type="common">Human</name>
    <dbReference type="NCBI Taxonomy" id="9606"/>
    <lineage>
        <taxon>Eukaryota</taxon>
        <taxon>Metazoa</taxon>
        <taxon>Chordata</taxon>
        <taxon>Craniata</taxon>
        <taxon>Vertebrata</taxon>
        <taxon>Euteleostomi</taxon>
        <taxon>Mammalia</taxon>
        <taxon>Eutheria</taxon>
        <taxon>Euarchontoglires</taxon>
        <taxon>Primates</taxon>
        <taxon>Haplorrhini</taxon>
        <taxon>Catarrhini</taxon>
        <taxon>Hominidae</taxon>
        <taxon>Homo</taxon>
    </lineage>
</organism>
<reference key="1">
    <citation type="journal article" date="2004" name="Hum. Mol. Genet.">
        <title>SNPs in the promoter of a B cell-specific antisense transcript, SAS-ZFAT, determine susceptibility to autoimmune thyroid disease.</title>
        <authorList>
            <person name="Shirasawa S."/>
            <person name="Harada H."/>
            <person name="Furugaki K."/>
            <person name="Akamizu T."/>
            <person name="Ishikawa N."/>
            <person name="Ito K."/>
            <person name="Ito K."/>
            <person name="Tamai H."/>
            <person name="Kuma K."/>
            <person name="Kubota S."/>
            <person name="Hiratani H."/>
            <person name="Tsuchiya T."/>
            <person name="Baba I."/>
            <person name="Ishikawa M."/>
            <person name="Tanaka M."/>
            <person name="Sakai K."/>
            <person name="Aoki M."/>
            <person name="Yamamoto K."/>
            <person name="Sasazuki T."/>
        </authorList>
    </citation>
    <scope>NUCLEOTIDE SEQUENCE [MRNA] (ISOFORMS 1; 2 AND 3)</scope>
    <scope>TISSUE SPECIFICITY</scope>
    <scope>VARIANTS ARG-64 AND SER-102</scope>
</reference>
<reference key="2">
    <citation type="journal article" date="2006" name="Nature">
        <title>DNA sequence and analysis of human chromosome 8.</title>
        <authorList>
            <person name="Nusbaum C."/>
            <person name="Mikkelsen T.S."/>
            <person name="Zody M.C."/>
            <person name="Asakawa S."/>
            <person name="Taudien S."/>
            <person name="Garber M."/>
            <person name="Kodira C.D."/>
            <person name="Schueler M.G."/>
            <person name="Shimizu A."/>
            <person name="Whittaker C.A."/>
            <person name="Chang J.L."/>
            <person name="Cuomo C.A."/>
            <person name="Dewar K."/>
            <person name="FitzGerald M.G."/>
            <person name="Yang X."/>
            <person name="Allen N.R."/>
            <person name="Anderson S."/>
            <person name="Asakawa T."/>
            <person name="Blechschmidt K."/>
            <person name="Bloom T."/>
            <person name="Borowsky M.L."/>
            <person name="Butler J."/>
            <person name="Cook A."/>
            <person name="Corum B."/>
            <person name="DeArellano K."/>
            <person name="DeCaprio D."/>
            <person name="Dooley K.T."/>
            <person name="Dorris L. III"/>
            <person name="Engels R."/>
            <person name="Gloeckner G."/>
            <person name="Hafez N."/>
            <person name="Hagopian D.S."/>
            <person name="Hall J.L."/>
            <person name="Ishikawa S.K."/>
            <person name="Jaffe D.B."/>
            <person name="Kamat A."/>
            <person name="Kudoh J."/>
            <person name="Lehmann R."/>
            <person name="Lokitsang T."/>
            <person name="Macdonald P."/>
            <person name="Major J.E."/>
            <person name="Matthews C.D."/>
            <person name="Mauceli E."/>
            <person name="Menzel U."/>
            <person name="Mihalev A.H."/>
            <person name="Minoshima S."/>
            <person name="Murayama Y."/>
            <person name="Naylor J.W."/>
            <person name="Nicol R."/>
            <person name="Nguyen C."/>
            <person name="O'Leary S.B."/>
            <person name="O'Neill K."/>
            <person name="Parker S.C.J."/>
            <person name="Polley A."/>
            <person name="Raymond C.K."/>
            <person name="Reichwald K."/>
            <person name="Rodriguez J."/>
            <person name="Sasaki T."/>
            <person name="Schilhabel M."/>
            <person name="Siddiqui R."/>
            <person name="Smith C.L."/>
            <person name="Sneddon T.P."/>
            <person name="Talamas J.A."/>
            <person name="Tenzin P."/>
            <person name="Topham K."/>
            <person name="Venkataraman V."/>
            <person name="Wen G."/>
            <person name="Yamazaki S."/>
            <person name="Young S.K."/>
            <person name="Zeng Q."/>
            <person name="Zimmer A.R."/>
            <person name="Rosenthal A."/>
            <person name="Birren B.W."/>
            <person name="Platzer M."/>
            <person name="Shimizu N."/>
            <person name="Lander E.S."/>
        </authorList>
    </citation>
    <scope>NUCLEOTIDE SEQUENCE [LARGE SCALE GENOMIC DNA]</scope>
</reference>
<reference key="3">
    <citation type="journal article" date="2004" name="Genome Res.">
        <title>The status, quality, and expansion of the NIH full-length cDNA project: the Mammalian Gene Collection (MGC).</title>
        <authorList>
            <consortium name="The MGC Project Team"/>
        </authorList>
    </citation>
    <scope>NUCLEOTIDE SEQUENCE [LARGE SCALE MRNA] (ISOFORMS 1 AND 4)</scope>
    <scope>VARIANTS ARG-64 AND SER-102</scope>
    <source>
        <tissue>Brain</tissue>
        <tissue>Placenta</tissue>
        <tissue>Skin</tissue>
    </source>
</reference>
<reference key="4">
    <citation type="journal article" date="2000" name="DNA Res.">
        <title>Prediction of the coding sequences of unidentified human genes. XVII. The complete sequences of 100 new cDNA clones from brain which code for large proteins in vitro.</title>
        <authorList>
            <person name="Nagase T."/>
            <person name="Kikuno R."/>
            <person name="Ishikawa K."/>
            <person name="Hirosawa M."/>
            <person name="Ohara O."/>
        </authorList>
    </citation>
    <scope>NUCLEOTIDE SEQUENCE [LARGE SCALE MRNA] OF 140-1243 (ISOFORM 1)</scope>
    <source>
        <tissue>Brain</tissue>
    </source>
</reference>
<reference evidence="11 12 13 14 15 16 17 18 19 20 21" key="5">
    <citation type="journal article" date="2015" name="J. Struct. Funct. Genomics">
        <title>Solution structures of the DNA-binding domains of immune-related zinc-finger protein ZFAT.</title>
        <authorList>
            <person name="Tochio N."/>
            <person name="Umehara T."/>
            <person name="Nakabayashi K."/>
            <person name="Yoneyama M."/>
            <person name="Tsuda K."/>
            <person name="Shirouzu M."/>
            <person name="Koshiba S."/>
            <person name="Watanabe S."/>
            <person name="Kigawa T."/>
            <person name="Sasazuki T."/>
            <person name="Shirasawa S."/>
            <person name="Yokoyama S."/>
        </authorList>
    </citation>
    <scope>STRUCTURE BY NMR OF 269-381; 402-430; 768-857 AND 878-963 IN COMPLEX WITH ZN(2+)</scope>
    <scope>ZINC FINGERS</scope>
</reference>
<reference key="6">
    <citation type="journal article" date="2017" name="Hum. Genet.">
        <title>Expanding the genetic heterogeneity of intellectual disability.</title>
        <authorList>
            <person name="Anazi S."/>
            <person name="Maddirevula S."/>
            <person name="Salpietro V."/>
            <person name="Asi Y.T."/>
            <person name="Alsahli S."/>
            <person name="Alhashem A."/>
            <person name="Shamseldin H.E."/>
            <person name="AlZahrani F."/>
            <person name="Patel N."/>
            <person name="Ibrahim N."/>
            <person name="Abdulwahab F.M."/>
            <person name="Hashem M."/>
            <person name="Alhashmi N."/>
            <person name="Al Murshedi F."/>
            <person name="Al Kindy A."/>
            <person name="Alshaer A."/>
            <person name="Rumayyan A."/>
            <person name="Al Tala S."/>
            <person name="Kurdi W."/>
            <person name="Alsaman A."/>
            <person name="Alasmari A."/>
            <person name="Banu S."/>
            <person name="Sultan T."/>
            <person name="Saleh M.M."/>
            <person name="Alkuraya H."/>
            <person name="Salih M.A."/>
            <person name="Aldhalaan H."/>
            <person name="Ben-Omran T."/>
            <person name="Al Musafri F."/>
            <person name="Ali R."/>
            <person name="Suleiman J."/>
            <person name="Tabarki B."/>
            <person name="El-Hattab A.W."/>
            <person name="Bupp C."/>
            <person name="Alfadhel M."/>
            <person name="Al Tassan N."/>
            <person name="Monies D."/>
            <person name="Arold S.T."/>
            <person name="Abouelhoda M."/>
            <person name="Lashley T."/>
            <person name="Houlden H."/>
            <person name="Faqeih E."/>
            <person name="Alkuraya F.S."/>
        </authorList>
    </citation>
    <scope>VARIANT GLN-400</scope>
</reference>
<reference key="7">
    <citation type="journal article" date="2018" name="Hum. Genet.">
        <title>Correction to: Expanding the genetic heterogeneity of intellectual disability.</title>
        <authorList>
            <person name="Anazi S."/>
            <person name="Maddirevula S."/>
            <person name="Salpietro V."/>
            <person name="Asi Y.T."/>
            <person name="Alsahli S."/>
            <person name="Alhashem A."/>
            <person name="Shamseldin H.E."/>
            <person name="AlZahrani F."/>
            <person name="Patel N."/>
            <person name="Ibrahim N."/>
            <person name="Abdulwahab F.M."/>
            <person name="Hashem M."/>
            <person name="Alhashmi N."/>
            <person name="Al Murshedi F."/>
            <person name="Al Kindy A."/>
            <person name="Alshaer A."/>
            <person name="Rumayyan A."/>
            <person name="Al Tala S."/>
            <person name="Kurdi W."/>
            <person name="Alsaman A."/>
            <person name="Alasmari A."/>
            <person name="Banu S."/>
            <person name="Sultan T."/>
            <person name="Saleh M.M."/>
            <person name="Alkuraya H."/>
            <person name="Salih M.A."/>
            <person name="Aldhalaan H."/>
            <person name="Ben-Omran T."/>
            <person name="Al Musafri F."/>
            <person name="Ali R."/>
            <person name="Suleiman J."/>
            <person name="Tabarki B."/>
            <person name="El-Hattab A.W."/>
            <person name="Bupp C."/>
            <person name="Alfadhel M."/>
            <person name="Al Tassan N."/>
            <person name="Monies D."/>
            <person name="Arold S.T."/>
            <person name="Abouelhoda M."/>
            <person name="Lashley T."/>
            <person name="Houlden H."/>
            <person name="Faqeih E."/>
            <person name="Alkuraya F.S."/>
        </authorList>
    </citation>
    <scope>ERRATUM OF PUBMED:28940097</scope>
</reference>
<comment type="function">
    <text evidence="1">May be involved in transcriptional regulation. Overexpression causes down-regulation of a number of genes involved in the immune response. Some genes are also up-regulated (By similarity).</text>
</comment>
<comment type="interaction">
    <interactant intactId="EBI-3943507">
        <id>Q9P243</id>
    </interactant>
    <interactant intactId="EBI-77321">
        <id>Q9UER7</id>
        <label>DAXX</label>
    </interactant>
    <organismsDiffer>false</organismsDiffer>
    <experiments>5</experiments>
</comment>
<comment type="subcellular location">
    <subcellularLocation>
        <location evidence="1">Nucleus</location>
    </subcellularLocation>
    <subcellularLocation>
        <location evidence="1">Cytoplasm</location>
        <location evidence="1">Cytosol</location>
    </subcellularLocation>
</comment>
<comment type="alternative products">
    <event type="alternative splicing"/>
    <isoform>
        <id>Q9P243-1</id>
        <name>1</name>
        <name>ZFAT-1</name>
        <sequence type="displayed"/>
    </isoform>
    <isoform>
        <id>Q9P243-2</id>
        <name>2</name>
        <name>ZFAT-2</name>
        <name>ZFAT-3</name>
        <sequence type="described" ref="VSP_016959"/>
    </isoform>
    <isoform>
        <id>Q9P243-3</id>
        <name>3</name>
        <name>TR-ZFAT</name>
        <sequence type="described" ref="VSP_016959 VSP_034938 VSP_034939"/>
    </isoform>
    <isoform>
        <id>Q9P243-4</id>
        <name>4</name>
        <sequence type="described" ref="VSP_045461"/>
    </isoform>
</comment>
<comment type="tissue specificity">
    <text evidence="5">Isoform 1 is strongly expressed in placenta, spleen, kidney, testis and peripheral blood leukocytes. Expressed in CD4+ and CD8+ T-cells, CD19+ B-cells and CB14+ monocytes. Isoform 3 is strongly expressed in placenta, ovary, tonsil, CD19+ B-cells and CD14+ monocytes.</text>
</comment>
<proteinExistence type="evidence at protein level"/>
<evidence type="ECO:0000250" key="1"/>
<evidence type="ECO:0000250" key="2">
    <source>
        <dbReference type="UniProtKB" id="Q7TS63"/>
    </source>
</evidence>
<evidence type="ECO:0000255" key="3">
    <source>
        <dbReference type="PROSITE-ProRule" id="PRU00042"/>
    </source>
</evidence>
<evidence type="ECO:0000256" key="4">
    <source>
        <dbReference type="SAM" id="MobiDB-lite"/>
    </source>
</evidence>
<evidence type="ECO:0000269" key="5">
    <source>
    </source>
</evidence>
<evidence type="ECO:0000269" key="6">
    <source>
    </source>
</evidence>
<evidence type="ECO:0000269" key="7">
    <source>
    </source>
</evidence>
<evidence type="ECO:0000269" key="8">
    <source>
    </source>
</evidence>
<evidence type="ECO:0000303" key="9">
    <source>
    </source>
</evidence>
<evidence type="ECO:0000303" key="10">
    <source>
    </source>
</evidence>
<evidence type="ECO:0007744" key="11">
    <source>
        <dbReference type="PDB" id="2ELM"/>
    </source>
</evidence>
<evidence type="ECO:0007744" key="12">
    <source>
        <dbReference type="PDB" id="2ELN"/>
    </source>
</evidence>
<evidence type="ECO:0007744" key="13">
    <source>
        <dbReference type="PDB" id="2ELO"/>
    </source>
</evidence>
<evidence type="ECO:0007744" key="14">
    <source>
        <dbReference type="PDB" id="2ELP"/>
    </source>
</evidence>
<evidence type="ECO:0007744" key="15">
    <source>
        <dbReference type="PDB" id="2ELQ"/>
    </source>
</evidence>
<evidence type="ECO:0007744" key="16">
    <source>
        <dbReference type="PDB" id="2ELR"/>
    </source>
</evidence>
<evidence type="ECO:0007744" key="17">
    <source>
        <dbReference type="PDB" id="2ELS"/>
    </source>
</evidence>
<evidence type="ECO:0007744" key="18">
    <source>
        <dbReference type="PDB" id="2ELT"/>
    </source>
</evidence>
<evidence type="ECO:0007744" key="19">
    <source>
        <dbReference type="PDB" id="2ELU"/>
    </source>
</evidence>
<evidence type="ECO:0007744" key="20">
    <source>
        <dbReference type="PDB" id="2ELV"/>
    </source>
</evidence>
<evidence type="ECO:0007744" key="21">
    <source>
        <dbReference type="PDB" id="2RSH"/>
    </source>
</evidence>
<evidence type="ECO:0007744" key="22">
    <source>
        <dbReference type="PDB" id="2RUT"/>
    </source>
</evidence>
<evidence type="ECO:0007744" key="23">
    <source>
        <dbReference type="PDB" id="2RUU"/>
    </source>
</evidence>
<evidence type="ECO:0007744" key="24">
    <source>
        <dbReference type="PDB" id="2RUV"/>
    </source>
</evidence>
<evidence type="ECO:0007744" key="25">
    <source>
        <dbReference type="PDB" id="2RUW"/>
    </source>
</evidence>
<evidence type="ECO:0007744" key="26">
    <source>
        <dbReference type="PDB" id="2RUX"/>
    </source>
</evidence>
<evidence type="ECO:0007744" key="27">
    <source>
        <dbReference type="PDB" id="2RUY"/>
    </source>
</evidence>
<evidence type="ECO:0007744" key="28">
    <source>
        <dbReference type="PDB" id="2RUZ"/>
    </source>
</evidence>
<evidence type="ECO:0007744" key="29">
    <source>
        <dbReference type="PDB" id="2RV0"/>
    </source>
</evidence>
<evidence type="ECO:0007744" key="30">
    <source>
        <dbReference type="PDB" id="2RV1"/>
    </source>
</evidence>
<evidence type="ECO:0007744" key="31">
    <source>
        <dbReference type="PDB" id="2RV2"/>
    </source>
</evidence>
<evidence type="ECO:0007744" key="32">
    <source>
        <dbReference type="PDB" id="2RV3"/>
    </source>
</evidence>
<evidence type="ECO:0007829" key="33">
    <source>
        <dbReference type="PDB" id="2ELM"/>
    </source>
</evidence>
<evidence type="ECO:0007829" key="34">
    <source>
        <dbReference type="PDB" id="2ELN"/>
    </source>
</evidence>
<evidence type="ECO:0007829" key="35">
    <source>
        <dbReference type="PDB" id="2ELO"/>
    </source>
</evidence>
<evidence type="ECO:0007829" key="36">
    <source>
        <dbReference type="PDB" id="2ELP"/>
    </source>
</evidence>
<evidence type="ECO:0007829" key="37">
    <source>
        <dbReference type="PDB" id="2ELQ"/>
    </source>
</evidence>
<evidence type="ECO:0007829" key="38">
    <source>
        <dbReference type="PDB" id="2ELR"/>
    </source>
</evidence>
<evidence type="ECO:0007829" key="39">
    <source>
        <dbReference type="PDB" id="2ELS"/>
    </source>
</evidence>
<evidence type="ECO:0007829" key="40">
    <source>
        <dbReference type="PDB" id="2ELT"/>
    </source>
</evidence>
<evidence type="ECO:0007829" key="41">
    <source>
        <dbReference type="PDB" id="2ELU"/>
    </source>
</evidence>
<evidence type="ECO:0007829" key="42">
    <source>
        <dbReference type="PDB" id="2ELV"/>
    </source>
</evidence>
<evidence type="ECO:0007829" key="43">
    <source>
        <dbReference type="PDB" id="2RSH"/>
    </source>
</evidence>
<evidence type="ECO:0007829" key="44">
    <source>
        <dbReference type="PDB" id="2RSI"/>
    </source>
</evidence>
<evidence type="ECO:0007829" key="45">
    <source>
        <dbReference type="PDB" id="2RV0"/>
    </source>
</evidence>
<evidence type="ECO:0007829" key="46">
    <source>
        <dbReference type="PDB" id="2RV3"/>
    </source>
</evidence>
<keyword id="KW-0002">3D-structure</keyword>
<keyword id="KW-0025">Alternative splicing</keyword>
<keyword id="KW-0963">Cytoplasm</keyword>
<keyword id="KW-0238">DNA-binding</keyword>
<keyword id="KW-0479">Metal-binding</keyword>
<keyword id="KW-0539">Nucleus</keyword>
<keyword id="KW-1267">Proteomics identification</keyword>
<keyword id="KW-1185">Reference proteome</keyword>
<keyword id="KW-0677">Repeat</keyword>
<keyword id="KW-0804">Transcription</keyword>
<keyword id="KW-0805">Transcription regulation</keyword>
<keyword id="KW-0862">Zinc</keyword>
<keyword id="KW-0863">Zinc-finger</keyword>
<sequence>METRAAENTAIFMCKCCNLFSPNQSELLSHVSEKHMEEGVNVDEIIIPLRPLSTPEPPNSSKTGDEFLVMKRKRGRPKGSTKKSSTEEELAENIVSPTEDSPLAPEEGNSLPPSSLECSKCCRKFSNTRQLRKHICIIVLNLGEEEGEAGNESDLELEKKCKEDDREKASKRPRSQKTEKVQKISGKEARQLSGAKKPIISVVLTAHEAIPGATKIVPVEAGPPETGATNSETTSADLVPRRGYQEYAIQQTPYEQPMKSSRLGPTQLKIFTCEYCNKVFKFKHSLQAHLRIHTNEKPYKCPQCSYASAIKANLNVHLRKHTGEKFACDYCSFTCLSKGHLKVHIERVHKKIKQHCRFCKKKYSDVKNLIKHIRDAHDPQDKKVKEALDELCLMTREGKRQLLYDCHICERKFKNELDRDRHMLVHGDKWPFACELCGHGATKYQALELHVRKHPFVYVCAVCRKKFVSSIRLRTHIKEVHGAAQEALVFTSSINQSFCLLEPGGDIQQEALGDQLQLVEEEFALQGVNALKEEACPGDTQLEEGRKEPEAPGEMPAPAVHLASPQAESTALPPCELETTVVSSSDLHSQEVVSDDFLLKNDTSSAEAHAAPEKPPDMQHRSSVQTQGEVITLLLSKAQSAGSDQESHGAQSPLGEGQNMAVLSAGDPDPSRCLRSNPAEASDLLPPVAGGGDTITHQPDSCKAAPEHRSGITAFMKVLNSLQKKQMNTSLCERIRKVYGDLECEYCGKLFWYQVHFDMHVRTHTREHLYYCSQCHYSSITKNCLKRHVIQKHSNILLKCPTDGCDYSTPDKYKLQAHLKVHTALDKRSYSCPVCEKSFSEDRLIKSHIKTNHPEVSMSTISEVLGRRVQLKGLIGKRAMKCPYCDFYFMKNGSDLQRHIWAHEGVKPFKCSLCEYATRSKSNLKAHMNRHSTEKTHLCDMCGKKFKSKGTLKSHKLLHTADGKQFKCTVCDYTAAQKPQLLRHMEQHVSFKPFRCAHCHYSCNISGSLKRHYNRKHPNEEYANVGTGELAAEVLIQQGGLKCPVCSFVYGTKWEFNRHLKNKHGLKVVEIDGDPKWETATEAPEEPSTQYLHITEAEEDVQGTQAAVAALQDLRYTSESGDRLDPTAVNILQQIIELGAETHDATALASVVAMAPGTVTVVKQVTEEEPSSNHTVMIQETVQQASVELAEQHHLVVSSDDVEGIETVTVYTQGGEASEFIVYVQEAMQPVEEQAVEQPAQEL</sequence>
<dbReference type="EMBL" id="AB167738">
    <property type="protein sequence ID" value="BAD12567.1"/>
    <property type="molecule type" value="mRNA"/>
</dbReference>
<dbReference type="EMBL" id="AB167739">
    <property type="protein sequence ID" value="BAD12568.1"/>
    <property type="molecule type" value="mRNA"/>
</dbReference>
<dbReference type="EMBL" id="AB167740">
    <property type="protein sequence ID" value="BAD12569.1"/>
    <property type="molecule type" value="mRNA"/>
</dbReference>
<dbReference type="EMBL" id="AB167741">
    <property type="protein sequence ID" value="BAD12570.1"/>
    <property type="molecule type" value="mRNA"/>
</dbReference>
<dbReference type="EMBL" id="AC015599">
    <property type="status" value="NOT_ANNOTATED_CDS"/>
    <property type="molecule type" value="Genomic_DNA"/>
</dbReference>
<dbReference type="EMBL" id="AC087045">
    <property type="status" value="NOT_ANNOTATED_CDS"/>
    <property type="molecule type" value="Genomic_DNA"/>
</dbReference>
<dbReference type="EMBL" id="AC135075">
    <property type="status" value="NOT_ANNOTATED_CDS"/>
    <property type="molecule type" value="Genomic_DNA"/>
</dbReference>
<dbReference type="EMBL" id="BC025423">
    <property type="protein sequence ID" value="AAH25423.1"/>
    <property type="molecule type" value="mRNA"/>
</dbReference>
<dbReference type="EMBL" id="BC046180">
    <property type="protein sequence ID" value="AAH46180.1"/>
    <property type="molecule type" value="mRNA"/>
</dbReference>
<dbReference type="EMBL" id="BC101766">
    <property type="protein sequence ID" value="AAI01767.1"/>
    <property type="molecule type" value="mRNA"/>
</dbReference>
<dbReference type="EMBL" id="BC101768">
    <property type="protein sequence ID" value="AAI01769.1"/>
    <property type="molecule type" value="mRNA"/>
</dbReference>
<dbReference type="EMBL" id="BC143519">
    <property type="protein sequence ID" value="AAI43520.1"/>
    <property type="molecule type" value="mRNA"/>
</dbReference>
<dbReference type="EMBL" id="AB040918">
    <property type="protein sequence ID" value="BAA96009.1"/>
    <property type="molecule type" value="mRNA"/>
</dbReference>
<dbReference type="CCDS" id="CCDS43768.2">
    <molecule id="Q9P243-2"/>
</dbReference>
<dbReference type="CCDS" id="CCDS47924.1">
    <molecule id="Q9P243-1"/>
</dbReference>
<dbReference type="CCDS" id="CCDS55276.1">
    <molecule id="Q9P243-4"/>
</dbReference>
<dbReference type="RefSeq" id="NP_001025110.2">
    <molecule id="Q9P243-2"/>
    <property type="nucleotide sequence ID" value="NM_001029939.4"/>
</dbReference>
<dbReference type="RefSeq" id="NP_001161055.1">
    <molecule id="Q9P243-2"/>
    <property type="nucleotide sequence ID" value="NM_001167583.3"/>
</dbReference>
<dbReference type="RefSeq" id="NP_001167628.1">
    <molecule id="Q9P243-4"/>
    <property type="nucleotide sequence ID" value="NM_001174157.2"/>
</dbReference>
<dbReference type="RefSeq" id="NP_001276323.1">
    <molecule id="Q9P243-2"/>
    <property type="nucleotide sequence ID" value="NM_001289394.2"/>
</dbReference>
<dbReference type="RefSeq" id="NP_065914.2">
    <molecule id="Q9P243-1"/>
    <property type="nucleotide sequence ID" value="NM_020863.3"/>
</dbReference>
<dbReference type="RefSeq" id="XP_011515505.1">
    <property type="nucleotide sequence ID" value="XM_011517203.1"/>
</dbReference>
<dbReference type="RefSeq" id="XP_047278018.1">
    <molecule id="Q9P243-1"/>
    <property type="nucleotide sequence ID" value="XM_047422062.1"/>
</dbReference>
<dbReference type="RefSeq" id="XP_047278019.1">
    <molecule id="Q9P243-2"/>
    <property type="nucleotide sequence ID" value="XM_047422063.1"/>
</dbReference>
<dbReference type="RefSeq" id="XP_054216915.1">
    <molecule id="Q9P243-1"/>
    <property type="nucleotide sequence ID" value="XM_054360940.1"/>
</dbReference>
<dbReference type="RefSeq" id="XP_054216916.1">
    <molecule id="Q9P243-1"/>
    <property type="nucleotide sequence ID" value="XM_054360941.1"/>
</dbReference>
<dbReference type="RefSeq" id="XP_054216917.1">
    <molecule id="Q9P243-2"/>
    <property type="nucleotide sequence ID" value="XM_054360942.1"/>
</dbReference>
<dbReference type="PDB" id="2ELM">
    <property type="method" value="NMR"/>
    <property type="chains" value="A=768-797"/>
</dbReference>
<dbReference type="PDB" id="2ELN">
    <property type="method" value="NMR"/>
    <property type="chains" value="A=796-826"/>
</dbReference>
<dbReference type="PDB" id="2ELO">
    <property type="method" value="NMR"/>
    <property type="chains" value="A=828-857"/>
</dbReference>
<dbReference type="PDB" id="2ELP">
    <property type="method" value="NMR"/>
    <property type="chains" value="A=878-907"/>
</dbReference>
<dbReference type="PDB" id="2ELQ">
    <property type="method" value="NMR"/>
    <property type="chains" value="A=907-935"/>
</dbReference>
<dbReference type="PDB" id="2ELR">
    <property type="method" value="NMR"/>
    <property type="chains" value="A=935-963"/>
</dbReference>
<dbReference type="PDB" id="2ELS">
    <property type="method" value="NMR"/>
    <property type="chains" value="A=269-297"/>
</dbReference>
<dbReference type="PDB" id="2ELT">
    <property type="method" value="NMR"/>
    <property type="chains" value="A=297-325"/>
</dbReference>
<dbReference type="PDB" id="2ELU">
    <property type="method" value="NMR"/>
    <property type="chains" value="A=352-381"/>
</dbReference>
<dbReference type="PDB" id="2ELV">
    <property type="method" value="NMR"/>
    <property type="chains" value="A=402-430"/>
</dbReference>
<dbReference type="PDB" id="2RSH">
    <property type="method" value="NMR"/>
    <property type="chains" value="A=324-353"/>
</dbReference>
<dbReference type="PDB" id="2RSI">
    <property type="method" value="NMR"/>
    <property type="chains" value="A=297-381"/>
</dbReference>
<dbReference type="PDB" id="2RSJ">
    <property type="method" value="NMR"/>
    <property type="chains" value="A=269-353"/>
</dbReference>
<dbReference type="PDB" id="2RUT">
    <property type="method" value="NMR"/>
    <property type="chains" value="A=269-297"/>
</dbReference>
<dbReference type="PDB" id="2RUU">
    <property type="method" value="NMR"/>
    <property type="chains" value="A=297-325"/>
</dbReference>
<dbReference type="PDB" id="2RUV">
    <property type="method" value="NMR"/>
    <property type="chains" value="A=323-353"/>
</dbReference>
<dbReference type="PDB" id="2RUW">
    <property type="method" value="NMR"/>
    <property type="chains" value="A=352-381"/>
</dbReference>
<dbReference type="PDB" id="2RUX">
    <property type="method" value="NMR"/>
    <property type="chains" value="A=402-430"/>
</dbReference>
<dbReference type="PDB" id="2RUY">
    <property type="method" value="NMR"/>
    <property type="chains" value="A=768-797"/>
</dbReference>
<dbReference type="PDB" id="2RUZ">
    <property type="method" value="NMR"/>
    <property type="chains" value="A=796-826"/>
</dbReference>
<dbReference type="PDB" id="2RV0">
    <property type="method" value="NMR"/>
    <property type="chains" value="A=828-857"/>
</dbReference>
<dbReference type="PDB" id="2RV1">
    <property type="method" value="NMR"/>
    <property type="chains" value="A=878-907"/>
</dbReference>
<dbReference type="PDB" id="2RV2">
    <property type="method" value="NMR"/>
    <property type="chains" value="A=907-935"/>
</dbReference>
<dbReference type="PDB" id="2RV3">
    <property type="method" value="NMR"/>
    <property type="chains" value="A=935-963"/>
</dbReference>
<dbReference type="PDB" id="2RV6">
    <property type="method" value="NMR"/>
    <property type="chains" value="A=269-353"/>
</dbReference>
<dbReference type="PDB" id="2RV7">
    <property type="method" value="NMR"/>
    <property type="chains" value="A=297-381"/>
</dbReference>
<dbReference type="PDBsum" id="2ELM"/>
<dbReference type="PDBsum" id="2ELN"/>
<dbReference type="PDBsum" id="2ELO"/>
<dbReference type="PDBsum" id="2ELP"/>
<dbReference type="PDBsum" id="2ELQ"/>
<dbReference type="PDBsum" id="2ELR"/>
<dbReference type="PDBsum" id="2ELS"/>
<dbReference type="PDBsum" id="2ELT"/>
<dbReference type="PDBsum" id="2ELU"/>
<dbReference type="PDBsum" id="2ELV"/>
<dbReference type="PDBsum" id="2RSH"/>
<dbReference type="PDBsum" id="2RSI"/>
<dbReference type="PDBsum" id="2RSJ"/>
<dbReference type="PDBsum" id="2RUT"/>
<dbReference type="PDBsum" id="2RUU"/>
<dbReference type="PDBsum" id="2RUV"/>
<dbReference type="PDBsum" id="2RUW"/>
<dbReference type="PDBsum" id="2RUX"/>
<dbReference type="PDBsum" id="2RUY"/>
<dbReference type="PDBsum" id="2RUZ"/>
<dbReference type="PDBsum" id="2RV0"/>
<dbReference type="PDBsum" id="2RV1"/>
<dbReference type="PDBsum" id="2RV2"/>
<dbReference type="PDBsum" id="2RV3"/>
<dbReference type="PDBsum" id="2RV6"/>
<dbReference type="PDBsum" id="2RV7"/>
<dbReference type="BMRB" id="Q9P243"/>
<dbReference type="SMR" id="Q9P243"/>
<dbReference type="BioGRID" id="121669">
    <property type="interactions" value="12"/>
</dbReference>
<dbReference type="FunCoup" id="Q9P243">
    <property type="interactions" value="640"/>
</dbReference>
<dbReference type="IntAct" id="Q9P243">
    <property type="interactions" value="7"/>
</dbReference>
<dbReference type="STRING" id="9606.ENSP00000367069"/>
<dbReference type="GlyGen" id="Q9P243">
    <property type="glycosylation" value="1 site, 1 O-linked glycan (1 site)"/>
</dbReference>
<dbReference type="iPTMnet" id="Q9P243"/>
<dbReference type="PhosphoSitePlus" id="Q9P243"/>
<dbReference type="BioMuta" id="ZFAT"/>
<dbReference type="DMDM" id="85681862"/>
<dbReference type="jPOST" id="Q9P243"/>
<dbReference type="MassIVE" id="Q9P243"/>
<dbReference type="PaxDb" id="9606-ENSP00000367069"/>
<dbReference type="PeptideAtlas" id="Q9P243"/>
<dbReference type="ProteomicsDB" id="19945"/>
<dbReference type="ProteomicsDB" id="83726">
    <molecule id="Q9P243-1"/>
</dbReference>
<dbReference type="ProteomicsDB" id="83727">
    <molecule id="Q9P243-2"/>
</dbReference>
<dbReference type="ProteomicsDB" id="83728">
    <molecule id="Q9P243-3"/>
</dbReference>
<dbReference type="Antibodypedia" id="27498">
    <property type="antibodies" value="35 antibodies from 15 providers"/>
</dbReference>
<dbReference type="DNASU" id="57623"/>
<dbReference type="Ensembl" id="ENST00000377838.8">
    <molecule id="Q9P243-1"/>
    <property type="protein sequence ID" value="ENSP00000367069.3"/>
    <property type="gene ID" value="ENSG00000066827.16"/>
</dbReference>
<dbReference type="Ensembl" id="ENST00000520214.5">
    <molecule id="Q9P243-2"/>
    <property type="protein sequence ID" value="ENSP00000428483.1"/>
    <property type="gene ID" value="ENSG00000066827.16"/>
</dbReference>
<dbReference type="Ensembl" id="ENST00000520727.5">
    <molecule id="Q9P243-2"/>
    <property type="protein sequence ID" value="ENSP00000427831.1"/>
    <property type="gene ID" value="ENSG00000066827.16"/>
</dbReference>
<dbReference type="Ensembl" id="ENST00000523399.5">
    <molecule id="Q9P243-4"/>
    <property type="protein sequence ID" value="ENSP00000429091.1"/>
    <property type="gene ID" value="ENSG00000066827.16"/>
</dbReference>
<dbReference type="GeneID" id="57623"/>
<dbReference type="KEGG" id="hsa:57623"/>
<dbReference type="MANE-Select" id="ENST00000377838.8">
    <property type="protein sequence ID" value="ENSP00000367069.3"/>
    <property type="RefSeq nucleotide sequence ID" value="NM_020863.4"/>
    <property type="RefSeq protein sequence ID" value="NP_065914.2"/>
</dbReference>
<dbReference type="UCSC" id="uc003yun.4">
    <molecule id="Q9P243-1"/>
    <property type="organism name" value="human"/>
</dbReference>
<dbReference type="AGR" id="HGNC:19899"/>
<dbReference type="CTD" id="57623"/>
<dbReference type="DisGeNET" id="57623"/>
<dbReference type="GeneCards" id="ZFAT"/>
<dbReference type="HGNC" id="HGNC:19899">
    <property type="gene designation" value="ZFAT"/>
</dbReference>
<dbReference type="HPA" id="ENSG00000066827">
    <property type="expression patterns" value="Tissue enhanced (placenta)"/>
</dbReference>
<dbReference type="MalaCards" id="ZFAT"/>
<dbReference type="MIM" id="610931">
    <property type="type" value="gene"/>
</dbReference>
<dbReference type="neXtProt" id="NX_Q9P243"/>
<dbReference type="OpenTargets" id="ENSG00000066827"/>
<dbReference type="PharmGKB" id="PA162409638"/>
<dbReference type="VEuPathDB" id="HostDB:ENSG00000066827"/>
<dbReference type="eggNOG" id="KOG1721">
    <property type="taxonomic scope" value="Eukaryota"/>
</dbReference>
<dbReference type="GeneTree" id="ENSGT00940000156658"/>
<dbReference type="HOGENOM" id="CLU_008355_0_0_1"/>
<dbReference type="InParanoid" id="Q9P243"/>
<dbReference type="OMA" id="WEQTTEI"/>
<dbReference type="OrthoDB" id="10015593at2759"/>
<dbReference type="PAN-GO" id="Q9P243">
    <property type="GO annotations" value="3 GO annotations based on evolutionary models"/>
</dbReference>
<dbReference type="PhylomeDB" id="Q9P243"/>
<dbReference type="TreeFam" id="TF350017"/>
<dbReference type="PathwayCommons" id="Q9P243"/>
<dbReference type="SignaLink" id="Q9P243"/>
<dbReference type="BioGRID-ORCS" id="57623">
    <property type="hits" value="50 hits in 1183 CRISPR screens"/>
</dbReference>
<dbReference type="ChiTaRS" id="ZFAT">
    <property type="organism name" value="human"/>
</dbReference>
<dbReference type="EvolutionaryTrace" id="Q9P243"/>
<dbReference type="GenomeRNAi" id="57623"/>
<dbReference type="Pharos" id="Q9P243">
    <property type="development level" value="Tbio"/>
</dbReference>
<dbReference type="PRO" id="PR:Q9P243"/>
<dbReference type="Proteomes" id="UP000005640">
    <property type="component" value="Chromosome 8"/>
</dbReference>
<dbReference type="RNAct" id="Q9P243">
    <property type="molecule type" value="protein"/>
</dbReference>
<dbReference type="Bgee" id="ENSG00000066827">
    <property type="expression patterns" value="Expressed in placenta and 112 other cell types or tissues"/>
</dbReference>
<dbReference type="ExpressionAtlas" id="Q9P243">
    <property type="expression patterns" value="baseline and differential"/>
</dbReference>
<dbReference type="GO" id="GO:0005829">
    <property type="term" value="C:cytosol"/>
    <property type="evidence" value="ECO:0007669"/>
    <property type="project" value="UniProtKB-SubCell"/>
</dbReference>
<dbReference type="GO" id="GO:0005634">
    <property type="term" value="C:nucleus"/>
    <property type="evidence" value="ECO:0007669"/>
    <property type="project" value="UniProtKB-SubCell"/>
</dbReference>
<dbReference type="GO" id="GO:0001228">
    <property type="term" value="F:DNA-binding transcription activator activity, RNA polymerase II-specific"/>
    <property type="evidence" value="ECO:0007669"/>
    <property type="project" value="Ensembl"/>
</dbReference>
<dbReference type="GO" id="GO:0000981">
    <property type="term" value="F:DNA-binding transcription factor activity, RNA polymerase II-specific"/>
    <property type="evidence" value="ECO:0000318"/>
    <property type="project" value="GO_Central"/>
</dbReference>
<dbReference type="GO" id="GO:0000978">
    <property type="term" value="F:RNA polymerase II cis-regulatory region sequence-specific DNA binding"/>
    <property type="evidence" value="ECO:0000318"/>
    <property type="project" value="GO_Central"/>
</dbReference>
<dbReference type="GO" id="GO:0008270">
    <property type="term" value="F:zinc ion binding"/>
    <property type="evidence" value="ECO:0007669"/>
    <property type="project" value="UniProtKB-KW"/>
</dbReference>
<dbReference type="GO" id="GO:0002244">
    <property type="term" value="P:hematopoietic progenitor cell differentiation"/>
    <property type="evidence" value="ECO:0007669"/>
    <property type="project" value="Ensembl"/>
</dbReference>
<dbReference type="GO" id="GO:0006355">
    <property type="term" value="P:regulation of DNA-templated transcription"/>
    <property type="evidence" value="ECO:0000318"/>
    <property type="project" value="GO_Central"/>
</dbReference>
<dbReference type="FunFam" id="3.30.160.60:FF:000255">
    <property type="entry name" value="Zinc finger and AT-hook domain containing"/>
    <property type="match status" value="1"/>
</dbReference>
<dbReference type="FunFam" id="3.30.160.60:FF:000297">
    <property type="entry name" value="Zinc finger and AT-hook domain containing"/>
    <property type="match status" value="1"/>
</dbReference>
<dbReference type="FunFam" id="3.30.160.60:FF:000306">
    <property type="entry name" value="Zinc finger and AT-hook domain containing"/>
    <property type="match status" value="1"/>
</dbReference>
<dbReference type="FunFam" id="3.30.160.60:FF:000327">
    <property type="entry name" value="Zinc finger and AT-hook domain containing"/>
    <property type="match status" value="1"/>
</dbReference>
<dbReference type="FunFam" id="3.30.160.60:FF:000351">
    <property type="entry name" value="Zinc finger and AT-hook domain containing"/>
    <property type="match status" value="1"/>
</dbReference>
<dbReference type="FunFam" id="3.30.160.60:FF:000401">
    <property type="entry name" value="Zinc finger and AT-hook domain containing"/>
    <property type="match status" value="1"/>
</dbReference>
<dbReference type="FunFam" id="3.30.160.60:FF:000442">
    <property type="entry name" value="Zinc finger and AT-hook domain containing"/>
    <property type="match status" value="1"/>
</dbReference>
<dbReference type="FunFam" id="3.30.160.60:FF:000687">
    <property type="entry name" value="Zinc finger and AT-hook domain containing"/>
    <property type="match status" value="1"/>
</dbReference>
<dbReference type="FunFam" id="3.30.160.60:FF:001388">
    <property type="entry name" value="Zinc finger and AT-hook domain containing"/>
    <property type="match status" value="1"/>
</dbReference>
<dbReference type="FunFam" id="3.30.160.60:FF:001389">
    <property type="entry name" value="Zinc finger and AT-hook domain containing"/>
    <property type="match status" value="1"/>
</dbReference>
<dbReference type="Gene3D" id="3.30.160.60">
    <property type="entry name" value="Classic Zinc Finger"/>
    <property type="match status" value="11"/>
</dbReference>
<dbReference type="InterPro" id="IPR050688">
    <property type="entry name" value="Zinc_finger/UBP_domain"/>
</dbReference>
<dbReference type="InterPro" id="IPR036236">
    <property type="entry name" value="Znf_C2H2_sf"/>
</dbReference>
<dbReference type="InterPro" id="IPR013087">
    <property type="entry name" value="Znf_C2H2_type"/>
</dbReference>
<dbReference type="PANTHER" id="PTHR24403:SF67">
    <property type="entry name" value="FI01116P-RELATED"/>
    <property type="match status" value="1"/>
</dbReference>
<dbReference type="PANTHER" id="PTHR24403">
    <property type="entry name" value="ZINC FINGER PROTEIN"/>
    <property type="match status" value="1"/>
</dbReference>
<dbReference type="Pfam" id="PF00096">
    <property type="entry name" value="zf-C2H2"/>
    <property type="match status" value="4"/>
</dbReference>
<dbReference type="Pfam" id="PF13909">
    <property type="entry name" value="zf-H2C2_5"/>
    <property type="match status" value="1"/>
</dbReference>
<dbReference type="SMART" id="SM00355">
    <property type="entry name" value="ZnF_C2H2"/>
    <property type="match status" value="19"/>
</dbReference>
<dbReference type="SUPFAM" id="SSF57667">
    <property type="entry name" value="beta-beta-alpha zinc fingers"/>
    <property type="match status" value="8"/>
</dbReference>
<dbReference type="PROSITE" id="PS00028">
    <property type="entry name" value="ZINC_FINGER_C2H2_1"/>
    <property type="match status" value="10"/>
</dbReference>
<dbReference type="PROSITE" id="PS50157">
    <property type="entry name" value="ZINC_FINGER_C2H2_2"/>
    <property type="match status" value="13"/>
</dbReference>
<name>ZFAT_HUMAN</name>
<accession>Q9P243</accession>
<accession>B7ZL15</accession>
<accession>E9PER3</accession>
<accession>Q3MIM5</accession>
<accession>Q6PJ01</accession>
<accession>Q75PJ6</accession>
<accession>Q75PJ7</accession>
<accession>Q75PJ9</accession>
<accession>Q86X64</accession>
<feature type="chain" id="PRO_0000047566" description="Zinc finger protein ZFAT">
    <location>
        <begin position="1"/>
        <end position="1243"/>
    </location>
</feature>
<feature type="zinc finger region" description="C2H2-type 1" evidence="3">
    <location>
        <begin position="12"/>
        <end position="35"/>
    </location>
</feature>
<feature type="zinc finger region" description="C2H2-type 2; degenerate" evidence="3">
    <location>
        <begin position="116"/>
        <end position="141"/>
    </location>
</feature>
<feature type="zinc finger region" description="C2H2-type 3" evidence="3 7 17 22">
    <location>
        <begin position="271"/>
        <end position="293"/>
    </location>
</feature>
<feature type="zinc finger region" description="C2H2-type 4" evidence="3 7 18 23">
    <location>
        <begin position="299"/>
        <end position="321"/>
    </location>
</feature>
<feature type="zinc finger region" description="C2H2-type 5" evidence="3 7 21 24">
    <location>
        <begin position="326"/>
        <end position="349"/>
    </location>
</feature>
<feature type="zinc finger region" description="C2H2-type 6" evidence="3 7 19 25">
    <location>
        <begin position="354"/>
        <end position="377"/>
    </location>
</feature>
<feature type="zinc finger region" description="C2H2-type 7" evidence="3 7 20 26">
    <location>
        <begin position="404"/>
        <end position="426"/>
    </location>
</feature>
<feature type="zinc finger region" description="C2H2-type 8" evidence="3">
    <location>
        <begin position="432"/>
        <end position="454"/>
    </location>
</feature>
<feature type="zinc finger region" description="C2H2-type 9" evidence="2">
    <location>
        <begin position="458"/>
        <end position="481"/>
    </location>
</feature>
<feature type="zinc finger region" description="C2H2-type 10" evidence="3">
    <location>
        <begin position="742"/>
        <end position="764"/>
    </location>
</feature>
<feature type="zinc finger region" description="C2H2-type 11" evidence="3 7 11 27">
    <location>
        <begin position="770"/>
        <end position="793"/>
    </location>
</feature>
<feature type="zinc finger region" description="C2H2-type 12" evidence="3 7 12 28">
    <location>
        <begin position="798"/>
        <end position="822"/>
    </location>
</feature>
<feature type="zinc finger region" description="C2H2-type 13" evidence="3 7 13 29">
    <location>
        <begin position="830"/>
        <end position="853"/>
    </location>
</feature>
<feature type="zinc finger region" description="C2H2-type 14" evidence="3 7 14 30">
    <location>
        <begin position="880"/>
        <end position="903"/>
    </location>
</feature>
<feature type="zinc finger region" description="C2H2-type 15" evidence="3 7 15 31">
    <location>
        <begin position="909"/>
        <end position="931"/>
    </location>
</feature>
<feature type="zinc finger region" description="C2H2-type 16" evidence="3 7 16 32">
    <location>
        <begin position="937"/>
        <end position="959"/>
    </location>
</feature>
<feature type="zinc finger region" description="C2H2-type 17" evidence="3">
    <location>
        <begin position="966"/>
        <end position="988"/>
    </location>
</feature>
<feature type="zinc finger region" description="C2H2-type 18" evidence="3">
    <location>
        <begin position="994"/>
        <end position="1017"/>
    </location>
</feature>
<feature type="zinc finger region" description="C2H2-type 19" evidence="3">
    <location>
        <begin position="1041"/>
        <end position="1064"/>
    </location>
</feature>
<feature type="region of interest" description="Disordered" evidence="4">
    <location>
        <begin position="51"/>
        <end position="116"/>
    </location>
</feature>
<feature type="region of interest" description="Disordered" evidence="4">
    <location>
        <begin position="147"/>
        <end position="189"/>
    </location>
</feature>
<feature type="region of interest" description="Disordered" evidence="4">
    <location>
        <begin position="534"/>
        <end position="570"/>
    </location>
</feature>
<feature type="region of interest" description="Disordered" evidence="4">
    <location>
        <begin position="603"/>
        <end position="625"/>
    </location>
</feature>
<feature type="region of interest" description="Disordered" evidence="4">
    <location>
        <begin position="638"/>
        <end position="705"/>
    </location>
</feature>
<feature type="compositionally biased region" description="Basic residues" evidence="4">
    <location>
        <begin position="70"/>
        <end position="81"/>
    </location>
</feature>
<feature type="compositionally biased region" description="Basic and acidic residues" evidence="4">
    <location>
        <begin position="156"/>
        <end position="189"/>
    </location>
</feature>
<feature type="compositionally biased region" description="Basic and acidic residues" evidence="4">
    <location>
        <begin position="610"/>
        <end position="620"/>
    </location>
</feature>
<feature type="compositionally biased region" description="Polar residues" evidence="4">
    <location>
        <begin position="638"/>
        <end position="650"/>
    </location>
</feature>
<feature type="binding site" evidence="7 17 22">
    <location>
        <position position="273"/>
    </location>
    <ligand>
        <name>Zn(2+)</name>
        <dbReference type="ChEBI" id="CHEBI:29105"/>
        <label>1</label>
    </ligand>
</feature>
<feature type="binding site" evidence="7 17 22">
    <location>
        <position position="276"/>
    </location>
    <ligand>
        <name>Zn(2+)</name>
        <dbReference type="ChEBI" id="CHEBI:29105"/>
        <label>1</label>
    </ligand>
</feature>
<feature type="binding site" evidence="7 17 22">
    <location>
        <position position="289"/>
    </location>
    <ligand>
        <name>Zn(2+)</name>
        <dbReference type="ChEBI" id="CHEBI:29105"/>
        <label>1</label>
    </ligand>
</feature>
<feature type="binding site" evidence="7 17 22">
    <location>
        <position position="293"/>
    </location>
    <ligand>
        <name>Zn(2+)</name>
        <dbReference type="ChEBI" id="CHEBI:29105"/>
        <label>1</label>
    </ligand>
</feature>
<feature type="binding site" evidence="7 18 23">
    <location>
        <position position="301"/>
    </location>
    <ligand>
        <name>Zn(2+)</name>
        <dbReference type="ChEBI" id="CHEBI:29105"/>
        <label>2</label>
    </ligand>
</feature>
<feature type="binding site" evidence="7 18 23">
    <location>
        <position position="304"/>
    </location>
    <ligand>
        <name>Zn(2+)</name>
        <dbReference type="ChEBI" id="CHEBI:29105"/>
        <label>2</label>
    </ligand>
</feature>
<feature type="binding site" evidence="7 18 23">
    <location>
        <position position="317"/>
    </location>
    <ligand>
        <name>Zn(2+)</name>
        <dbReference type="ChEBI" id="CHEBI:29105"/>
        <label>2</label>
    </ligand>
</feature>
<feature type="binding site" evidence="7 18 23">
    <location>
        <position position="321"/>
    </location>
    <ligand>
        <name>Zn(2+)</name>
        <dbReference type="ChEBI" id="CHEBI:29105"/>
        <label>2</label>
    </ligand>
</feature>
<feature type="binding site" evidence="7 21 24">
    <location>
        <position position="328"/>
    </location>
    <ligand>
        <name>Zn(2+)</name>
        <dbReference type="ChEBI" id="CHEBI:29105"/>
        <label>3</label>
    </ligand>
</feature>
<feature type="binding site" evidence="7 21 24">
    <location>
        <position position="331"/>
    </location>
    <ligand>
        <name>Zn(2+)</name>
        <dbReference type="ChEBI" id="CHEBI:29105"/>
        <label>3</label>
    </ligand>
</feature>
<feature type="binding site" evidence="7 21 24">
    <location>
        <position position="344"/>
    </location>
    <ligand>
        <name>Zn(2+)</name>
        <dbReference type="ChEBI" id="CHEBI:29105"/>
        <label>3</label>
    </ligand>
</feature>
<feature type="binding site" evidence="7 21 24">
    <location>
        <position position="349"/>
    </location>
    <ligand>
        <name>Zn(2+)</name>
        <dbReference type="ChEBI" id="CHEBI:29105"/>
        <label>3</label>
    </ligand>
</feature>
<feature type="binding site" evidence="7 19 25">
    <location>
        <position position="356"/>
    </location>
    <ligand>
        <name>Zn(2+)</name>
        <dbReference type="ChEBI" id="CHEBI:29105"/>
        <label>4</label>
    </ligand>
</feature>
<feature type="binding site" evidence="7 19 25">
    <location>
        <position position="359"/>
    </location>
    <ligand>
        <name>Zn(2+)</name>
        <dbReference type="ChEBI" id="CHEBI:29105"/>
        <label>4</label>
    </ligand>
</feature>
<feature type="binding site" evidence="7 19 25">
    <location>
        <position position="372"/>
    </location>
    <ligand>
        <name>Zn(2+)</name>
        <dbReference type="ChEBI" id="CHEBI:29105"/>
        <label>4</label>
    </ligand>
</feature>
<feature type="binding site" evidence="7 19 25">
    <location>
        <position position="377"/>
    </location>
    <ligand>
        <name>Zn(2+)</name>
        <dbReference type="ChEBI" id="CHEBI:29105"/>
        <label>4</label>
    </ligand>
</feature>
<feature type="binding site" evidence="7 20 26">
    <location>
        <position position="406"/>
    </location>
    <ligand>
        <name>Zn(2+)</name>
        <dbReference type="ChEBI" id="CHEBI:29105"/>
        <label>5</label>
    </ligand>
</feature>
<feature type="binding site" evidence="7 20 26">
    <location>
        <position position="409"/>
    </location>
    <ligand>
        <name>Zn(2+)</name>
        <dbReference type="ChEBI" id="CHEBI:29105"/>
        <label>5</label>
    </ligand>
</feature>
<feature type="binding site" evidence="7 20 26">
    <location>
        <position position="422"/>
    </location>
    <ligand>
        <name>Zn(2+)</name>
        <dbReference type="ChEBI" id="CHEBI:29105"/>
        <label>5</label>
    </ligand>
</feature>
<feature type="binding site" evidence="7 20 26">
    <location>
        <position position="426"/>
    </location>
    <ligand>
        <name>Zn(2+)</name>
        <dbReference type="ChEBI" id="CHEBI:29105"/>
        <label>5</label>
    </ligand>
</feature>
<feature type="binding site" evidence="2">
    <location>
        <position position="460"/>
    </location>
    <ligand>
        <name>Zn(2+)</name>
        <dbReference type="ChEBI" id="CHEBI:29105"/>
        <label>6</label>
    </ligand>
</feature>
<feature type="binding site" evidence="2">
    <location>
        <position position="463"/>
    </location>
    <ligand>
        <name>Zn(2+)</name>
        <dbReference type="ChEBI" id="CHEBI:29105"/>
        <label>6</label>
    </ligand>
</feature>
<feature type="binding site" evidence="2">
    <location>
        <position position="476"/>
    </location>
    <ligand>
        <name>Zn(2+)</name>
        <dbReference type="ChEBI" id="CHEBI:29105"/>
        <label>6</label>
    </ligand>
</feature>
<feature type="binding site" evidence="2">
    <location>
        <position position="481"/>
    </location>
    <ligand>
        <name>Zn(2+)</name>
        <dbReference type="ChEBI" id="CHEBI:29105"/>
        <label>6</label>
    </ligand>
</feature>
<feature type="binding site" evidence="7 11 27">
    <location>
        <position position="772"/>
    </location>
    <ligand>
        <name>Zn(2+)</name>
        <dbReference type="ChEBI" id="CHEBI:29105"/>
        <label>7</label>
    </ligand>
</feature>
<feature type="binding site" evidence="7 11 27">
    <location>
        <position position="775"/>
    </location>
    <ligand>
        <name>Zn(2+)</name>
        <dbReference type="ChEBI" id="CHEBI:29105"/>
        <label>7</label>
    </ligand>
</feature>
<feature type="binding site" evidence="7 11 27">
    <location>
        <position position="788"/>
    </location>
    <ligand>
        <name>Zn(2+)</name>
        <dbReference type="ChEBI" id="CHEBI:29105"/>
        <label>7</label>
    </ligand>
</feature>
<feature type="binding site" evidence="7 11 27">
    <location>
        <position position="793"/>
    </location>
    <ligand>
        <name>Zn(2+)</name>
        <dbReference type="ChEBI" id="CHEBI:29105"/>
        <label>7</label>
    </ligand>
</feature>
<feature type="binding site" evidence="7 12 28">
    <location>
        <position position="800"/>
    </location>
    <ligand>
        <name>Zn(2+)</name>
        <dbReference type="ChEBI" id="CHEBI:29105"/>
        <label>8</label>
    </ligand>
</feature>
<feature type="binding site" evidence="7 12 28">
    <location>
        <position position="805"/>
    </location>
    <ligand>
        <name>Zn(2+)</name>
        <dbReference type="ChEBI" id="CHEBI:29105"/>
        <label>8</label>
    </ligand>
</feature>
<feature type="binding site" evidence="7 12 28">
    <location>
        <position position="818"/>
    </location>
    <ligand>
        <name>Zn(2+)</name>
        <dbReference type="ChEBI" id="CHEBI:29105"/>
        <label>8</label>
    </ligand>
</feature>
<feature type="binding site" evidence="7 12 28">
    <location>
        <position position="822"/>
    </location>
    <ligand>
        <name>Zn(2+)</name>
        <dbReference type="ChEBI" id="CHEBI:29105"/>
        <label>8</label>
    </ligand>
</feature>
<feature type="binding site" evidence="7 13 29">
    <location>
        <position position="832"/>
    </location>
    <ligand>
        <name>Zn(2+)</name>
        <dbReference type="ChEBI" id="CHEBI:29105"/>
        <label>9</label>
    </ligand>
</feature>
<feature type="binding site" evidence="7 13 29">
    <location>
        <position position="835"/>
    </location>
    <ligand>
        <name>Zn(2+)</name>
        <dbReference type="ChEBI" id="CHEBI:29105"/>
        <label>9</label>
    </ligand>
</feature>
<feature type="binding site" evidence="7 13 29">
    <location>
        <position position="848"/>
    </location>
    <ligand>
        <name>Zn(2+)</name>
        <dbReference type="ChEBI" id="CHEBI:29105"/>
        <label>9</label>
    </ligand>
</feature>
<feature type="binding site" evidence="7 13 29">
    <location>
        <position position="853"/>
    </location>
    <ligand>
        <name>Zn(2+)</name>
        <dbReference type="ChEBI" id="CHEBI:29105"/>
        <label>9</label>
    </ligand>
</feature>
<feature type="binding site" evidence="7 14 30">
    <location>
        <position position="882"/>
    </location>
    <ligand>
        <name>Zn(2+)</name>
        <dbReference type="ChEBI" id="CHEBI:29105"/>
        <label>10</label>
    </ligand>
</feature>
<feature type="binding site" evidence="7 14 30">
    <location>
        <position position="885"/>
    </location>
    <ligand>
        <name>Zn(2+)</name>
        <dbReference type="ChEBI" id="CHEBI:29105"/>
        <label>10</label>
    </ligand>
</feature>
<feature type="binding site" evidence="7 14 30">
    <location>
        <position position="899"/>
    </location>
    <ligand>
        <name>Zn(2+)</name>
        <dbReference type="ChEBI" id="CHEBI:29105"/>
        <label>10</label>
    </ligand>
</feature>
<feature type="binding site" evidence="7 14 30">
    <location>
        <position position="903"/>
    </location>
    <ligand>
        <name>Zn(2+)</name>
        <dbReference type="ChEBI" id="CHEBI:29105"/>
        <label>10</label>
    </ligand>
</feature>
<feature type="binding site" evidence="7 15 31">
    <location>
        <position position="911"/>
    </location>
    <ligand>
        <name>Zn(2+)</name>
        <dbReference type="ChEBI" id="CHEBI:29105"/>
        <label>11</label>
    </ligand>
</feature>
<feature type="binding site" evidence="7 15 31">
    <location>
        <position position="914"/>
    </location>
    <ligand>
        <name>Zn(2+)</name>
        <dbReference type="ChEBI" id="CHEBI:29105"/>
        <label>11</label>
    </ligand>
</feature>
<feature type="binding site" evidence="7 15 31">
    <location>
        <position position="927"/>
    </location>
    <ligand>
        <name>Zn(2+)</name>
        <dbReference type="ChEBI" id="CHEBI:29105"/>
        <label>11</label>
    </ligand>
</feature>
<feature type="binding site" evidence="7 15 31">
    <location>
        <position position="931"/>
    </location>
    <ligand>
        <name>Zn(2+)</name>
        <dbReference type="ChEBI" id="CHEBI:29105"/>
        <label>11</label>
    </ligand>
</feature>
<feature type="binding site" evidence="7 16 32">
    <location>
        <position position="939"/>
    </location>
    <ligand>
        <name>Zn(2+)</name>
        <dbReference type="ChEBI" id="CHEBI:29105"/>
        <label>12</label>
    </ligand>
</feature>
<feature type="binding site" evidence="7 16 32">
    <location>
        <position position="942"/>
    </location>
    <ligand>
        <name>Zn(2+)</name>
        <dbReference type="ChEBI" id="CHEBI:29105"/>
        <label>12</label>
    </ligand>
</feature>
<feature type="binding site" evidence="7 16 32">
    <location>
        <position position="955"/>
    </location>
    <ligand>
        <name>Zn(2+)</name>
        <dbReference type="ChEBI" id="CHEBI:29105"/>
        <label>12</label>
    </ligand>
</feature>
<feature type="binding site" evidence="7 16 32">
    <location>
        <position position="958"/>
    </location>
    <ligand>
        <name>Zn(2+)</name>
        <dbReference type="ChEBI" id="CHEBI:29105"/>
        <label>12</label>
    </ligand>
</feature>
<feature type="splice variant" id="VSP_016959" description="In isoform 2 and isoform 3." evidence="9">
    <location>
        <begin position="1"/>
        <end position="12"/>
    </location>
</feature>
<feature type="splice variant" id="VSP_045461" description="In isoform 4." evidence="10">
    <location>
        <begin position="150"/>
        <end position="211"/>
    </location>
</feature>
<feature type="splice variant" id="VSP_034938" description="In isoform 3." evidence="9">
    <original>DKRSYSCPVCEKSFSEDRLIKSHIKTNHPEVSM</original>
    <variation>VSSKPKRQPRLPWVLIAFSSLCLYVGVSAAGQP</variation>
    <location>
        <begin position="826"/>
        <end position="858"/>
    </location>
</feature>
<feature type="splice variant" id="VSP_034939" description="In isoform 3." evidence="9">
    <location>
        <begin position="859"/>
        <end position="1243"/>
    </location>
</feature>
<feature type="sequence variant" id="VAR_024840" description="In dbSNP:rs17778003." evidence="5 6">
    <original>G</original>
    <variation>R</variation>
    <location>
        <position position="64"/>
    </location>
</feature>
<feature type="sequence variant" id="VAR_045815" description="In dbSNP:rs12541381." evidence="5">
    <original>P</original>
    <variation>S</variation>
    <location>
        <position position="102"/>
    </location>
</feature>
<feature type="sequence variant" id="VAR_084658" description="Found in a patient with global developmental delay; uncertain significance." evidence="8">
    <original>R</original>
    <variation>Q</variation>
    <location>
        <position position="400"/>
    </location>
</feature>
<feature type="sequence variant" id="VAR_052819" description="In dbSNP:rs35003767.">
    <original>R</original>
    <variation>K</variation>
    <location>
        <position position="672"/>
    </location>
</feature>
<feature type="turn" evidence="39">
    <location>
        <begin position="274"/>
        <end position="276"/>
    </location>
</feature>
<feature type="strand" evidence="39">
    <location>
        <begin position="279"/>
        <end position="282"/>
    </location>
</feature>
<feature type="helix" evidence="39">
    <location>
        <begin position="283"/>
        <end position="293"/>
    </location>
</feature>
<feature type="strand" evidence="40">
    <location>
        <begin position="298"/>
        <end position="300"/>
    </location>
</feature>
<feature type="strand" evidence="40">
    <location>
        <begin position="302"/>
        <end position="305"/>
    </location>
</feature>
<feature type="strand" evidence="40">
    <location>
        <begin position="307"/>
        <end position="310"/>
    </location>
</feature>
<feature type="helix" evidence="40">
    <location>
        <begin position="311"/>
        <end position="321"/>
    </location>
</feature>
<feature type="strand" evidence="43">
    <location>
        <begin position="329"/>
        <end position="331"/>
    </location>
</feature>
<feature type="strand" evidence="44">
    <location>
        <begin position="334"/>
        <end position="336"/>
    </location>
</feature>
<feature type="helix" evidence="43">
    <location>
        <begin position="338"/>
        <end position="347"/>
    </location>
</feature>
<feature type="turn" evidence="41">
    <location>
        <begin position="357"/>
        <end position="359"/>
    </location>
</feature>
<feature type="strand" evidence="44">
    <location>
        <begin position="362"/>
        <end position="365"/>
    </location>
</feature>
<feature type="helix" evidence="41">
    <location>
        <begin position="366"/>
        <end position="375"/>
    </location>
</feature>
<feature type="strand" evidence="42">
    <location>
        <begin position="407"/>
        <end position="409"/>
    </location>
</feature>
<feature type="strand" evidence="42">
    <location>
        <begin position="412"/>
        <end position="415"/>
    </location>
</feature>
<feature type="helix" evidence="42">
    <location>
        <begin position="416"/>
        <end position="423"/>
    </location>
</feature>
<feature type="turn" evidence="42">
    <location>
        <begin position="424"/>
        <end position="426"/>
    </location>
</feature>
<feature type="strand" evidence="33">
    <location>
        <begin position="769"/>
        <end position="771"/>
    </location>
</feature>
<feature type="strand" evidence="33">
    <location>
        <begin position="773"/>
        <end position="776"/>
    </location>
</feature>
<feature type="strand" evidence="33">
    <location>
        <begin position="778"/>
        <end position="780"/>
    </location>
</feature>
<feature type="helix" evidence="33">
    <location>
        <begin position="782"/>
        <end position="792"/>
    </location>
</feature>
<feature type="strand" evidence="34">
    <location>
        <begin position="801"/>
        <end position="804"/>
    </location>
</feature>
<feature type="strand" evidence="34">
    <location>
        <begin position="808"/>
        <end position="810"/>
    </location>
</feature>
<feature type="helix" evidence="34">
    <location>
        <begin position="812"/>
        <end position="822"/>
    </location>
</feature>
<feature type="turn" evidence="35">
    <location>
        <begin position="833"/>
        <end position="836"/>
    </location>
</feature>
<feature type="strand" evidence="45">
    <location>
        <begin position="838"/>
        <end position="841"/>
    </location>
</feature>
<feature type="helix" evidence="35">
    <location>
        <begin position="842"/>
        <end position="852"/>
    </location>
</feature>
<feature type="helix" evidence="45">
    <location>
        <begin position="854"/>
        <end position="856"/>
    </location>
</feature>
<feature type="strand" evidence="36">
    <location>
        <begin position="883"/>
        <end position="886"/>
    </location>
</feature>
<feature type="helix" evidence="36">
    <location>
        <begin position="894"/>
        <end position="904"/>
    </location>
</feature>
<feature type="strand" evidence="37">
    <location>
        <begin position="908"/>
        <end position="910"/>
    </location>
</feature>
<feature type="strand" evidence="37">
    <location>
        <begin position="912"/>
        <end position="915"/>
    </location>
</feature>
<feature type="strand" evidence="37">
    <location>
        <begin position="917"/>
        <end position="919"/>
    </location>
</feature>
<feature type="helix" evidence="37">
    <location>
        <begin position="921"/>
        <end position="930"/>
    </location>
</feature>
<feature type="turn" evidence="38">
    <location>
        <begin position="940"/>
        <end position="942"/>
    </location>
</feature>
<feature type="strand" evidence="46">
    <location>
        <begin position="945"/>
        <end position="948"/>
    </location>
</feature>
<feature type="helix" evidence="38">
    <location>
        <begin position="949"/>
        <end position="959"/>
    </location>
</feature>